<feature type="chain" id="PRO_0000100523" description="Phosphoribosylformylglycinamidine synthase subunit PurL">
    <location>
        <begin position="1"/>
        <end position="713"/>
    </location>
</feature>
<feature type="active site" evidence="1">
    <location>
        <position position="32"/>
    </location>
</feature>
<feature type="active site" description="Proton acceptor" evidence="1">
    <location>
        <position position="78"/>
    </location>
</feature>
<feature type="binding site" evidence="1">
    <location>
        <position position="35"/>
    </location>
    <ligand>
        <name>ATP</name>
        <dbReference type="ChEBI" id="CHEBI:30616"/>
    </ligand>
</feature>
<feature type="binding site" evidence="1">
    <location>
        <position position="76"/>
    </location>
    <ligand>
        <name>Mg(2+)</name>
        <dbReference type="ChEBI" id="CHEBI:18420"/>
        <label>1</label>
    </ligand>
</feature>
<feature type="binding site" evidence="1">
    <location>
        <begin position="77"/>
        <end position="80"/>
    </location>
    <ligand>
        <name>substrate</name>
    </ligand>
</feature>
<feature type="binding site" evidence="1">
    <location>
        <position position="99"/>
    </location>
    <ligand>
        <name>substrate</name>
    </ligand>
</feature>
<feature type="binding site" evidence="1">
    <location>
        <position position="100"/>
    </location>
    <ligand>
        <name>Mg(2+)</name>
        <dbReference type="ChEBI" id="CHEBI:18420"/>
        <label>2</label>
    </ligand>
</feature>
<feature type="binding site" evidence="1">
    <location>
        <position position="224"/>
    </location>
    <ligand>
        <name>substrate</name>
    </ligand>
</feature>
<feature type="binding site" evidence="1">
    <location>
        <position position="252"/>
    </location>
    <ligand>
        <name>Mg(2+)</name>
        <dbReference type="ChEBI" id="CHEBI:18420"/>
        <label>2</label>
    </ligand>
</feature>
<feature type="binding site" evidence="1">
    <location>
        <begin position="296"/>
        <end position="298"/>
    </location>
    <ligand>
        <name>substrate</name>
    </ligand>
</feature>
<feature type="binding site" evidence="1">
    <location>
        <position position="471"/>
    </location>
    <ligand>
        <name>ATP</name>
        <dbReference type="ChEBI" id="CHEBI:30616"/>
    </ligand>
</feature>
<feature type="binding site" evidence="1">
    <location>
        <position position="508"/>
    </location>
    <ligand>
        <name>ATP</name>
        <dbReference type="ChEBI" id="CHEBI:30616"/>
    </ligand>
</feature>
<feature type="binding site" evidence="1">
    <location>
        <position position="509"/>
    </location>
    <ligand>
        <name>Mg(2+)</name>
        <dbReference type="ChEBI" id="CHEBI:18420"/>
        <label>1</label>
    </ligand>
</feature>
<feature type="binding site" evidence="1">
    <location>
        <position position="511"/>
    </location>
    <ligand>
        <name>substrate</name>
    </ligand>
</feature>
<accession>Q5JFL7</accession>
<organism>
    <name type="scientific">Thermococcus kodakarensis (strain ATCC BAA-918 / JCM 12380 / KOD1)</name>
    <name type="common">Pyrococcus kodakaraensis (strain KOD1)</name>
    <dbReference type="NCBI Taxonomy" id="69014"/>
    <lineage>
        <taxon>Archaea</taxon>
        <taxon>Methanobacteriati</taxon>
        <taxon>Methanobacteriota</taxon>
        <taxon>Thermococci</taxon>
        <taxon>Thermococcales</taxon>
        <taxon>Thermococcaceae</taxon>
        <taxon>Thermococcus</taxon>
    </lineage>
</organism>
<protein>
    <recommendedName>
        <fullName evidence="1">Phosphoribosylformylglycinamidine synthase subunit PurL</fullName>
        <shortName evidence="1">FGAM synthase</shortName>
        <ecNumber evidence="1">6.3.5.3</ecNumber>
    </recommendedName>
    <alternativeName>
        <fullName evidence="1">Formylglycinamide ribonucleotide amidotransferase subunit II</fullName>
        <shortName evidence="1">FGAR amidotransferase II</shortName>
        <shortName evidence="1">FGAR-AT II</shortName>
    </alternativeName>
    <alternativeName>
        <fullName evidence="1">Glutamine amidotransferase PurL</fullName>
    </alternativeName>
    <alternativeName>
        <fullName evidence="1">Phosphoribosylformylglycinamidine synthase subunit II</fullName>
    </alternativeName>
</protein>
<reference key="1">
    <citation type="journal article" date="2005" name="Genome Res.">
        <title>Complete genome sequence of the hyperthermophilic archaeon Thermococcus kodakaraensis KOD1 and comparison with Pyrococcus genomes.</title>
        <authorList>
            <person name="Fukui T."/>
            <person name="Atomi H."/>
            <person name="Kanai T."/>
            <person name="Matsumi R."/>
            <person name="Fujiwara S."/>
            <person name="Imanaka T."/>
        </authorList>
    </citation>
    <scope>NUCLEOTIDE SEQUENCE [LARGE SCALE GENOMIC DNA]</scope>
    <source>
        <strain>ATCC BAA-918 / JCM 12380 / KOD1</strain>
    </source>
</reference>
<sequence length="713" mass="78396">MFPHEEKLIRERLGREPNEVEKAMLEVMWSEHASYKSSRPFLKLLPTENEHVVLGPGEDAGIVKFDDETWIAVGIESHNHPSAVEPYGGAATGVGGIVRDILCMGARPIALLDPIRFGPLEKERNRYLLQGVVKGIADYGNRIGVPTVGGETEFDESLDNYTLVNVACVGIMRPEHFVHSYVEEAGLKLVLVGNRTGRDGIHGVTFASEELSENAEEEDRSAVQIPDPFTEKLLIEATLEAVYTGKVRALKDLGGGGLTCASSEMAGKKGFGAVIYADRVPLREPNMTPTEVMISESQERMLFAVREEDVEEIGKIFEKYGLEWTVVGEIIKEPRYIVYWKGEKVADLPIDLLTEVPTIEWETRPYSLERDVETPKISFSDAFELVWSSPNVLNKRWVWEQYDHEVQGRTVVKPGRDAAVLKINERYGLAFVADGNPNHSHLNPYHGAMGAVAEVVRNLVSVGAEPLALVDNLNFASPERPEVYWSFAETVRGLADAARAFGLAYVSGNVSFYNEVVDRPIKPTPVVAGLGKVELEKIPGFGLEEGLLIGVVGSTKRELGGSELYVRLGLKGGIAPRVNLEEEKANAEGILEAIRRGLLKAVHDVSKGGIAVALAEMAVLGNTGFTADLSKVPAETSNPLEVAFSESHGRYIVVFPEERLEELKALFRHFAVIGRAGGSGAVFLWNGDELLRKPITKLREVHESFPKLLGEEE</sequence>
<proteinExistence type="inferred from homology"/>
<name>PURL_THEKO</name>
<gene>
    <name evidence="1" type="primary">purL</name>
    <name type="ordered locus">TK0197</name>
</gene>
<comment type="function">
    <text evidence="1">Part of the phosphoribosylformylglycinamidine synthase complex involved in the purines biosynthetic pathway. Catalyzes the ATP-dependent conversion of formylglycinamide ribonucleotide (FGAR) and glutamine to yield formylglycinamidine ribonucleotide (FGAM) and glutamate. The FGAM synthase complex is composed of three subunits. PurQ produces an ammonia molecule by converting glutamine to glutamate. PurL transfers the ammonia molecule to FGAR to form FGAM in an ATP-dependent manner. PurS interacts with PurQ and PurL and is thought to assist in the transfer of the ammonia molecule from PurQ to PurL.</text>
</comment>
<comment type="catalytic activity">
    <reaction evidence="1">
        <text>N(2)-formyl-N(1)-(5-phospho-beta-D-ribosyl)glycinamide + L-glutamine + ATP + H2O = 2-formamido-N(1)-(5-O-phospho-beta-D-ribosyl)acetamidine + L-glutamate + ADP + phosphate + H(+)</text>
        <dbReference type="Rhea" id="RHEA:17129"/>
        <dbReference type="ChEBI" id="CHEBI:15377"/>
        <dbReference type="ChEBI" id="CHEBI:15378"/>
        <dbReference type="ChEBI" id="CHEBI:29985"/>
        <dbReference type="ChEBI" id="CHEBI:30616"/>
        <dbReference type="ChEBI" id="CHEBI:43474"/>
        <dbReference type="ChEBI" id="CHEBI:58359"/>
        <dbReference type="ChEBI" id="CHEBI:147286"/>
        <dbReference type="ChEBI" id="CHEBI:147287"/>
        <dbReference type="ChEBI" id="CHEBI:456216"/>
        <dbReference type="EC" id="6.3.5.3"/>
    </reaction>
</comment>
<comment type="pathway">
    <text evidence="1">Purine metabolism; IMP biosynthesis via de novo pathway; 5-amino-1-(5-phospho-D-ribosyl)imidazole from N(2)-formyl-N(1)-(5-phospho-D-ribosyl)glycinamide: step 1/2.</text>
</comment>
<comment type="subunit">
    <text evidence="1">Monomer. Part of the FGAM synthase complex composed of 1 PurL, 1 PurQ and 2 PurS subunits.</text>
</comment>
<comment type="subcellular location">
    <subcellularLocation>
        <location evidence="1">Cytoplasm</location>
    </subcellularLocation>
</comment>
<comment type="similarity">
    <text evidence="1">Belongs to the FGAMS family.</text>
</comment>
<dbReference type="EC" id="6.3.5.3" evidence="1"/>
<dbReference type="EMBL" id="AP006878">
    <property type="protein sequence ID" value="BAD84386.1"/>
    <property type="molecule type" value="Genomic_DNA"/>
</dbReference>
<dbReference type="RefSeq" id="WP_011249152.1">
    <property type="nucleotide sequence ID" value="NC_006624.1"/>
</dbReference>
<dbReference type="SMR" id="Q5JFL7"/>
<dbReference type="FunCoup" id="Q5JFL7">
    <property type="interactions" value="220"/>
</dbReference>
<dbReference type="STRING" id="69014.TK0197"/>
<dbReference type="EnsemblBacteria" id="BAD84386">
    <property type="protein sequence ID" value="BAD84386"/>
    <property type="gene ID" value="TK0197"/>
</dbReference>
<dbReference type="GeneID" id="78446701"/>
<dbReference type="KEGG" id="tko:TK0197"/>
<dbReference type="PATRIC" id="fig|69014.16.peg.196"/>
<dbReference type="eggNOG" id="arCOG00641">
    <property type="taxonomic scope" value="Archaea"/>
</dbReference>
<dbReference type="HOGENOM" id="CLU_003100_0_1_2"/>
<dbReference type="InParanoid" id="Q5JFL7"/>
<dbReference type="OrthoDB" id="8251at2157"/>
<dbReference type="PhylomeDB" id="Q5JFL7"/>
<dbReference type="UniPathway" id="UPA00074">
    <property type="reaction ID" value="UER00128"/>
</dbReference>
<dbReference type="Proteomes" id="UP000000536">
    <property type="component" value="Chromosome"/>
</dbReference>
<dbReference type="GO" id="GO:0005737">
    <property type="term" value="C:cytoplasm"/>
    <property type="evidence" value="ECO:0007669"/>
    <property type="project" value="UniProtKB-SubCell"/>
</dbReference>
<dbReference type="GO" id="GO:0005524">
    <property type="term" value="F:ATP binding"/>
    <property type="evidence" value="ECO:0007669"/>
    <property type="project" value="UniProtKB-UniRule"/>
</dbReference>
<dbReference type="GO" id="GO:0000287">
    <property type="term" value="F:magnesium ion binding"/>
    <property type="evidence" value="ECO:0007669"/>
    <property type="project" value="UniProtKB-UniRule"/>
</dbReference>
<dbReference type="GO" id="GO:0004642">
    <property type="term" value="F:phosphoribosylformylglycinamidine synthase activity"/>
    <property type="evidence" value="ECO:0000318"/>
    <property type="project" value="GO_Central"/>
</dbReference>
<dbReference type="GO" id="GO:0006189">
    <property type="term" value="P:'de novo' IMP biosynthetic process"/>
    <property type="evidence" value="ECO:0007669"/>
    <property type="project" value="UniProtKB-UniRule"/>
</dbReference>
<dbReference type="GO" id="GO:0006164">
    <property type="term" value="P:purine nucleotide biosynthetic process"/>
    <property type="evidence" value="ECO:0000318"/>
    <property type="project" value="GO_Central"/>
</dbReference>
<dbReference type="CDD" id="cd02203">
    <property type="entry name" value="PurL_repeat1"/>
    <property type="match status" value="1"/>
</dbReference>
<dbReference type="CDD" id="cd02204">
    <property type="entry name" value="PurL_repeat2"/>
    <property type="match status" value="1"/>
</dbReference>
<dbReference type="FunFam" id="3.30.1330.10:FF:000004">
    <property type="entry name" value="Phosphoribosylformylglycinamidine synthase subunit PurL"/>
    <property type="match status" value="1"/>
</dbReference>
<dbReference type="Gene3D" id="3.90.650.10">
    <property type="entry name" value="PurM-like C-terminal domain"/>
    <property type="match status" value="2"/>
</dbReference>
<dbReference type="Gene3D" id="3.30.1330.10">
    <property type="entry name" value="PurM-like, N-terminal domain"/>
    <property type="match status" value="2"/>
</dbReference>
<dbReference type="HAMAP" id="MF_00420">
    <property type="entry name" value="PurL_2"/>
    <property type="match status" value="1"/>
</dbReference>
<dbReference type="InterPro" id="IPR010074">
    <property type="entry name" value="PRibForGlyAmidine_synth_PurL"/>
</dbReference>
<dbReference type="InterPro" id="IPR041609">
    <property type="entry name" value="PurL_linker"/>
</dbReference>
<dbReference type="InterPro" id="IPR010918">
    <property type="entry name" value="PurM-like_C_dom"/>
</dbReference>
<dbReference type="InterPro" id="IPR036676">
    <property type="entry name" value="PurM-like_C_sf"/>
</dbReference>
<dbReference type="InterPro" id="IPR016188">
    <property type="entry name" value="PurM-like_N"/>
</dbReference>
<dbReference type="InterPro" id="IPR036921">
    <property type="entry name" value="PurM-like_N_sf"/>
</dbReference>
<dbReference type="NCBIfam" id="TIGR01736">
    <property type="entry name" value="FGAM_synth_II"/>
    <property type="match status" value="1"/>
</dbReference>
<dbReference type="NCBIfam" id="NF002290">
    <property type="entry name" value="PRK01213.1"/>
    <property type="match status" value="1"/>
</dbReference>
<dbReference type="PANTHER" id="PTHR43555">
    <property type="entry name" value="PHOSPHORIBOSYLFORMYLGLYCINAMIDINE SYNTHASE SUBUNIT PURL"/>
    <property type="match status" value="1"/>
</dbReference>
<dbReference type="PANTHER" id="PTHR43555:SF1">
    <property type="entry name" value="PHOSPHORIBOSYLFORMYLGLYCINAMIDINE SYNTHASE SUBUNIT PURL"/>
    <property type="match status" value="1"/>
</dbReference>
<dbReference type="Pfam" id="PF00586">
    <property type="entry name" value="AIRS"/>
    <property type="match status" value="2"/>
</dbReference>
<dbReference type="Pfam" id="PF02769">
    <property type="entry name" value="AIRS_C"/>
    <property type="match status" value="2"/>
</dbReference>
<dbReference type="Pfam" id="PF18072">
    <property type="entry name" value="FGAR-AT_linker"/>
    <property type="match status" value="1"/>
</dbReference>
<dbReference type="PIRSF" id="PIRSF001587">
    <property type="entry name" value="FGAM_synthase_II"/>
    <property type="match status" value="1"/>
</dbReference>
<dbReference type="SUPFAM" id="SSF56042">
    <property type="entry name" value="PurM C-terminal domain-like"/>
    <property type="match status" value="2"/>
</dbReference>
<dbReference type="SUPFAM" id="SSF55326">
    <property type="entry name" value="PurM N-terminal domain-like"/>
    <property type="match status" value="2"/>
</dbReference>
<keyword id="KW-0067">ATP-binding</keyword>
<keyword id="KW-0963">Cytoplasm</keyword>
<keyword id="KW-0436">Ligase</keyword>
<keyword id="KW-0460">Magnesium</keyword>
<keyword id="KW-0479">Metal-binding</keyword>
<keyword id="KW-0547">Nucleotide-binding</keyword>
<keyword id="KW-0658">Purine biosynthesis</keyword>
<keyword id="KW-1185">Reference proteome</keyword>
<evidence type="ECO:0000255" key="1">
    <source>
        <dbReference type="HAMAP-Rule" id="MF_00420"/>
    </source>
</evidence>